<proteinExistence type="inferred from homology"/>
<comment type="catalytic activity">
    <reaction evidence="1">
        <text>1-(5-phospho-beta-D-ribosyl)-5-[(5-phospho-beta-D-ribosylamino)methylideneamino]imidazole-4-carboxamide = 5-[(5-phospho-1-deoxy-D-ribulos-1-ylimino)methylamino]-1-(5-phospho-beta-D-ribosyl)imidazole-4-carboxamide</text>
        <dbReference type="Rhea" id="RHEA:15469"/>
        <dbReference type="ChEBI" id="CHEBI:58435"/>
        <dbReference type="ChEBI" id="CHEBI:58525"/>
        <dbReference type="EC" id="5.3.1.16"/>
    </reaction>
</comment>
<comment type="pathway">
    <text evidence="1">Amino-acid biosynthesis; L-histidine biosynthesis; L-histidine from 5-phospho-alpha-D-ribose 1-diphosphate: step 4/9.</text>
</comment>
<comment type="subcellular location">
    <subcellularLocation>
        <location evidence="1">Cytoplasm</location>
    </subcellularLocation>
</comment>
<comment type="similarity">
    <text evidence="1">Belongs to the HisA/HisF family.</text>
</comment>
<organism>
    <name type="scientific">Burkholderia cenocepacia (strain HI2424)</name>
    <dbReference type="NCBI Taxonomy" id="331272"/>
    <lineage>
        <taxon>Bacteria</taxon>
        <taxon>Pseudomonadati</taxon>
        <taxon>Pseudomonadota</taxon>
        <taxon>Betaproteobacteria</taxon>
        <taxon>Burkholderiales</taxon>
        <taxon>Burkholderiaceae</taxon>
        <taxon>Burkholderia</taxon>
        <taxon>Burkholderia cepacia complex</taxon>
    </lineage>
</organism>
<sequence length="251" mass="26570">MLLIPAIDLKDGQCVRLKQGDMDQATIFSEDPAAMARKWVDLGARRLHLVDLNGAFAGKPKNLEAIEAILDEVGDEIPVQLGGGIRSLETIEKYLDAGLSYVIIGTAAVKNPGFLQDACTAFSGSIIVGLDAKDGKVATDGWSKLTGHEVIDLAKKFEDYGVESIVYTDIGRDGMLQGINIDATVKLAQAVGIPVIASGGLSNLPDIESLCEVEEHGVEGVICGRAIYSGDLDFAAAQKRADELNGELDNA</sequence>
<name>HIS4_BURCH</name>
<evidence type="ECO:0000255" key="1">
    <source>
        <dbReference type="HAMAP-Rule" id="MF_01014"/>
    </source>
</evidence>
<dbReference type="EC" id="5.3.1.16" evidence="1"/>
<dbReference type="EMBL" id="CP000458">
    <property type="protein sequence ID" value="ABK07184.1"/>
    <property type="molecule type" value="Genomic_DNA"/>
</dbReference>
<dbReference type="RefSeq" id="WP_011694115.1">
    <property type="nucleotide sequence ID" value="NC_008542.1"/>
</dbReference>
<dbReference type="SMR" id="A0K3V7"/>
<dbReference type="KEGG" id="bch:Bcen2424_0430"/>
<dbReference type="HOGENOM" id="CLU_048577_1_1_4"/>
<dbReference type="UniPathway" id="UPA00031">
    <property type="reaction ID" value="UER00009"/>
</dbReference>
<dbReference type="GO" id="GO:0005737">
    <property type="term" value="C:cytoplasm"/>
    <property type="evidence" value="ECO:0007669"/>
    <property type="project" value="UniProtKB-SubCell"/>
</dbReference>
<dbReference type="GO" id="GO:0003949">
    <property type="term" value="F:1-(5-phosphoribosyl)-5-[(5-phosphoribosylamino)methylideneamino]imidazole-4-carboxamide isomerase activity"/>
    <property type="evidence" value="ECO:0007669"/>
    <property type="project" value="UniProtKB-UniRule"/>
</dbReference>
<dbReference type="GO" id="GO:0000105">
    <property type="term" value="P:L-histidine biosynthetic process"/>
    <property type="evidence" value="ECO:0007669"/>
    <property type="project" value="UniProtKB-UniRule"/>
</dbReference>
<dbReference type="GO" id="GO:0000162">
    <property type="term" value="P:L-tryptophan biosynthetic process"/>
    <property type="evidence" value="ECO:0007669"/>
    <property type="project" value="TreeGrafter"/>
</dbReference>
<dbReference type="CDD" id="cd04732">
    <property type="entry name" value="HisA"/>
    <property type="match status" value="1"/>
</dbReference>
<dbReference type="FunFam" id="3.20.20.70:FF:000009">
    <property type="entry name" value="1-(5-phosphoribosyl)-5-[(5-phosphoribosylamino)methylideneamino] imidazole-4-carboxamide isomerase"/>
    <property type="match status" value="1"/>
</dbReference>
<dbReference type="Gene3D" id="3.20.20.70">
    <property type="entry name" value="Aldolase class I"/>
    <property type="match status" value="1"/>
</dbReference>
<dbReference type="HAMAP" id="MF_01014">
    <property type="entry name" value="HisA"/>
    <property type="match status" value="1"/>
</dbReference>
<dbReference type="InterPro" id="IPR013785">
    <property type="entry name" value="Aldolase_TIM"/>
</dbReference>
<dbReference type="InterPro" id="IPR006062">
    <property type="entry name" value="His_biosynth"/>
</dbReference>
<dbReference type="InterPro" id="IPR006063">
    <property type="entry name" value="HisA_bact_arch"/>
</dbReference>
<dbReference type="InterPro" id="IPR044524">
    <property type="entry name" value="Isoase_HisA-like"/>
</dbReference>
<dbReference type="InterPro" id="IPR023016">
    <property type="entry name" value="Isoase_HisA-like_bact"/>
</dbReference>
<dbReference type="InterPro" id="IPR011060">
    <property type="entry name" value="RibuloseP-bd_barrel"/>
</dbReference>
<dbReference type="NCBIfam" id="TIGR00007">
    <property type="entry name" value="1-(5-phosphoribosyl)-5-[(5-phosphoribosylamino)methylideneamino]imidazole-4-carboxamide isomerase"/>
    <property type="match status" value="1"/>
</dbReference>
<dbReference type="NCBIfam" id="NF010112">
    <property type="entry name" value="PRK13585.1"/>
    <property type="match status" value="1"/>
</dbReference>
<dbReference type="PANTHER" id="PTHR43090">
    <property type="entry name" value="1-(5-PHOSPHORIBOSYL)-5-[(5-PHOSPHORIBOSYLAMINO)METHYLIDENEAMINO] IMIDAZOLE-4-CARBOXAMIDE ISOMERASE"/>
    <property type="match status" value="1"/>
</dbReference>
<dbReference type="PANTHER" id="PTHR43090:SF2">
    <property type="entry name" value="1-(5-PHOSPHORIBOSYL)-5-[(5-PHOSPHORIBOSYLAMINO)METHYLIDENEAMINO] IMIDAZOLE-4-CARBOXAMIDE ISOMERASE"/>
    <property type="match status" value="1"/>
</dbReference>
<dbReference type="Pfam" id="PF00977">
    <property type="entry name" value="His_biosynth"/>
    <property type="match status" value="1"/>
</dbReference>
<dbReference type="SUPFAM" id="SSF51366">
    <property type="entry name" value="Ribulose-phoshate binding barrel"/>
    <property type="match status" value="1"/>
</dbReference>
<reference key="1">
    <citation type="submission" date="2006-08" db="EMBL/GenBank/DDBJ databases">
        <title>Complete sequence of chromosome 1 of Burkholderia cenocepacia HI2424.</title>
        <authorList>
            <person name="Copeland A."/>
            <person name="Lucas S."/>
            <person name="Lapidus A."/>
            <person name="Barry K."/>
            <person name="Detter J.C."/>
            <person name="Glavina del Rio T."/>
            <person name="Hammon N."/>
            <person name="Israni S."/>
            <person name="Pitluck S."/>
            <person name="Chain P."/>
            <person name="Malfatti S."/>
            <person name="Shin M."/>
            <person name="Vergez L."/>
            <person name="Schmutz J."/>
            <person name="Larimer F."/>
            <person name="Land M."/>
            <person name="Hauser L."/>
            <person name="Kyrpides N."/>
            <person name="Kim E."/>
            <person name="LiPuma J.J."/>
            <person name="Gonzalez C.F."/>
            <person name="Konstantinidis K."/>
            <person name="Tiedje J.M."/>
            <person name="Richardson P."/>
        </authorList>
    </citation>
    <scope>NUCLEOTIDE SEQUENCE [LARGE SCALE GENOMIC DNA]</scope>
    <source>
        <strain>HI2424</strain>
    </source>
</reference>
<keyword id="KW-0028">Amino-acid biosynthesis</keyword>
<keyword id="KW-0963">Cytoplasm</keyword>
<keyword id="KW-0368">Histidine biosynthesis</keyword>
<keyword id="KW-0413">Isomerase</keyword>
<protein>
    <recommendedName>
        <fullName evidence="1">1-(5-phosphoribosyl)-5-[(5-phosphoribosylamino)methylideneamino] imidazole-4-carboxamide isomerase</fullName>
        <ecNumber evidence="1">5.3.1.16</ecNumber>
    </recommendedName>
    <alternativeName>
        <fullName evidence="1">Phosphoribosylformimino-5-aminoimidazole carboxamide ribotide isomerase</fullName>
    </alternativeName>
</protein>
<feature type="chain" id="PRO_0000290456" description="1-(5-phosphoribosyl)-5-[(5-phosphoribosylamino)methylideneamino] imidazole-4-carboxamide isomerase">
    <location>
        <begin position="1"/>
        <end position="251"/>
    </location>
</feature>
<feature type="active site" description="Proton acceptor" evidence="1">
    <location>
        <position position="8"/>
    </location>
</feature>
<feature type="active site" description="Proton donor" evidence="1">
    <location>
        <position position="131"/>
    </location>
</feature>
<gene>
    <name evidence="1" type="primary">hisA</name>
    <name type="ordered locus">Bcen2424_0430</name>
</gene>
<accession>A0K3V7</accession>